<feature type="chain" id="PRO_0000241051" description="S-adenosylmethionine synthase">
    <location>
        <begin position="1"/>
        <end position="417"/>
    </location>
</feature>
<feature type="region of interest" description="Flexible loop" evidence="1">
    <location>
        <begin position="100"/>
        <end position="110"/>
    </location>
</feature>
<feature type="binding site" description="in other chain" evidence="1">
    <location>
        <position position="16"/>
    </location>
    <ligand>
        <name>ATP</name>
        <dbReference type="ChEBI" id="CHEBI:30616"/>
        <note>ligand shared between two neighboring subunits</note>
    </ligand>
</feature>
<feature type="binding site" evidence="1">
    <location>
        <position position="18"/>
    </location>
    <ligand>
        <name>Mg(2+)</name>
        <dbReference type="ChEBI" id="CHEBI:18420"/>
    </ligand>
</feature>
<feature type="binding site" evidence="1">
    <location>
        <position position="44"/>
    </location>
    <ligand>
        <name>K(+)</name>
        <dbReference type="ChEBI" id="CHEBI:29103"/>
    </ligand>
</feature>
<feature type="binding site" description="in other chain" evidence="1">
    <location>
        <position position="57"/>
    </location>
    <ligand>
        <name>L-methionine</name>
        <dbReference type="ChEBI" id="CHEBI:57844"/>
        <note>ligand shared between two neighboring subunits</note>
    </ligand>
</feature>
<feature type="binding site" description="in other chain" evidence="1">
    <location>
        <position position="100"/>
    </location>
    <ligand>
        <name>L-methionine</name>
        <dbReference type="ChEBI" id="CHEBI:57844"/>
        <note>ligand shared between two neighboring subunits</note>
    </ligand>
</feature>
<feature type="binding site" description="in other chain" evidence="1">
    <location>
        <begin position="175"/>
        <end position="177"/>
    </location>
    <ligand>
        <name>ATP</name>
        <dbReference type="ChEBI" id="CHEBI:30616"/>
        <note>ligand shared between two neighboring subunits</note>
    </ligand>
</feature>
<feature type="binding site" description="in other chain" evidence="1">
    <location>
        <begin position="251"/>
        <end position="252"/>
    </location>
    <ligand>
        <name>ATP</name>
        <dbReference type="ChEBI" id="CHEBI:30616"/>
        <note>ligand shared between two neighboring subunits</note>
    </ligand>
</feature>
<feature type="binding site" evidence="1">
    <location>
        <position position="260"/>
    </location>
    <ligand>
        <name>ATP</name>
        <dbReference type="ChEBI" id="CHEBI:30616"/>
        <note>ligand shared between two neighboring subunits</note>
    </ligand>
</feature>
<feature type="binding site" evidence="1">
    <location>
        <position position="260"/>
    </location>
    <ligand>
        <name>L-methionine</name>
        <dbReference type="ChEBI" id="CHEBI:57844"/>
        <note>ligand shared between two neighboring subunits</note>
    </ligand>
</feature>
<feature type="binding site" description="in other chain" evidence="1">
    <location>
        <begin position="266"/>
        <end position="267"/>
    </location>
    <ligand>
        <name>ATP</name>
        <dbReference type="ChEBI" id="CHEBI:30616"/>
        <note>ligand shared between two neighboring subunits</note>
    </ligand>
</feature>
<feature type="binding site" evidence="1">
    <location>
        <position position="283"/>
    </location>
    <ligand>
        <name>ATP</name>
        <dbReference type="ChEBI" id="CHEBI:30616"/>
        <note>ligand shared between two neighboring subunits</note>
    </ligand>
</feature>
<feature type="binding site" evidence="1">
    <location>
        <position position="287"/>
    </location>
    <ligand>
        <name>ATP</name>
        <dbReference type="ChEBI" id="CHEBI:30616"/>
        <note>ligand shared between two neighboring subunits</note>
    </ligand>
</feature>
<feature type="binding site" description="in other chain" evidence="1">
    <location>
        <position position="291"/>
    </location>
    <ligand>
        <name>L-methionine</name>
        <dbReference type="ChEBI" id="CHEBI:57844"/>
        <note>ligand shared between two neighboring subunits</note>
    </ligand>
</feature>
<proteinExistence type="inferred from homology"/>
<reference key="1">
    <citation type="submission" date="2005-08" db="EMBL/GenBank/DDBJ databases">
        <title>Complete sequence of chromosome 1 of Synechococcus elongatus PCC 7942.</title>
        <authorList>
            <consortium name="US DOE Joint Genome Institute"/>
            <person name="Copeland A."/>
            <person name="Lucas S."/>
            <person name="Lapidus A."/>
            <person name="Barry K."/>
            <person name="Detter J.C."/>
            <person name="Glavina T."/>
            <person name="Hammon N."/>
            <person name="Israni S."/>
            <person name="Pitluck S."/>
            <person name="Schmutz J."/>
            <person name="Larimer F."/>
            <person name="Land M."/>
            <person name="Kyrpides N."/>
            <person name="Lykidis A."/>
            <person name="Golden S."/>
            <person name="Richardson P."/>
        </authorList>
    </citation>
    <scope>NUCLEOTIDE SEQUENCE [LARGE SCALE GENOMIC DNA]</scope>
    <source>
        <strain>ATCC 33912 / PCC 7942 / FACHB-805</strain>
    </source>
</reference>
<sequence length="417" mass="45189">MTRRYLFTSESVTEGHPDKICDQISDTILDALLTEDPSSRVAAEVVVNTGLVLITGEVSTQAQTNLIDLARRKIAEIGYTGEDSGFGANNCTVLIALDKQSPDIAQGVDTAQEQRQASSDERFDSIGAGDQGIMFGYACNEAPELMPLPISLSHRLARQLAVVRHNGQLDYLRPDGKTQVTIAYEDGKPVAIDTILISTQHKAAIGDISDDNAVQERIKSDLWEQVVLPVFSDLVIQPDSATRFLVNPTGKFVIGGPQGDAGLTGRKIIVDTYGGYSRHGGGAFSGKDPTKVDRSAAYACRYVAKNIVAAGLAEKCEVQLSYAIGVARPVSVLVETFGTGKVADEVLLDLVRKHFELRPAGIIEHFNLQRLPGERGGRFYQEVAAYGHFGRNDLDLPWEQTDKADTLRQEALATTQA</sequence>
<gene>
    <name evidence="1" type="primary">metK</name>
    <name type="ordered locus">Synpcc7942_2463</name>
</gene>
<keyword id="KW-0067">ATP-binding</keyword>
<keyword id="KW-0963">Cytoplasm</keyword>
<keyword id="KW-0460">Magnesium</keyword>
<keyword id="KW-0479">Metal-binding</keyword>
<keyword id="KW-0547">Nucleotide-binding</keyword>
<keyword id="KW-0554">One-carbon metabolism</keyword>
<keyword id="KW-0630">Potassium</keyword>
<keyword id="KW-1185">Reference proteome</keyword>
<keyword id="KW-0808">Transferase</keyword>
<accession>Q31KC6</accession>
<protein>
    <recommendedName>
        <fullName evidence="1">S-adenosylmethionine synthase</fullName>
        <shortName evidence="1">AdoMet synthase</shortName>
        <ecNumber evidence="1">2.5.1.6</ecNumber>
    </recommendedName>
    <alternativeName>
        <fullName evidence="1">MAT</fullName>
    </alternativeName>
    <alternativeName>
        <fullName evidence="1">Methionine adenosyltransferase</fullName>
    </alternativeName>
</protein>
<organism>
    <name type="scientific">Synechococcus elongatus (strain ATCC 33912 / PCC 7942 / FACHB-805)</name>
    <name type="common">Anacystis nidulans R2</name>
    <dbReference type="NCBI Taxonomy" id="1140"/>
    <lineage>
        <taxon>Bacteria</taxon>
        <taxon>Bacillati</taxon>
        <taxon>Cyanobacteriota</taxon>
        <taxon>Cyanophyceae</taxon>
        <taxon>Synechococcales</taxon>
        <taxon>Synechococcaceae</taxon>
        <taxon>Synechococcus</taxon>
    </lineage>
</organism>
<comment type="function">
    <text evidence="1">Catalyzes the formation of S-adenosylmethionine (AdoMet) from methionine and ATP. The overall synthetic reaction is composed of two sequential steps, AdoMet formation and the subsequent tripolyphosphate hydrolysis which occurs prior to release of AdoMet from the enzyme.</text>
</comment>
<comment type="catalytic activity">
    <reaction evidence="1">
        <text>L-methionine + ATP + H2O = S-adenosyl-L-methionine + phosphate + diphosphate</text>
        <dbReference type="Rhea" id="RHEA:21080"/>
        <dbReference type="ChEBI" id="CHEBI:15377"/>
        <dbReference type="ChEBI" id="CHEBI:30616"/>
        <dbReference type="ChEBI" id="CHEBI:33019"/>
        <dbReference type="ChEBI" id="CHEBI:43474"/>
        <dbReference type="ChEBI" id="CHEBI:57844"/>
        <dbReference type="ChEBI" id="CHEBI:59789"/>
        <dbReference type="EC" id="2.5.1.6"/>
    </reaction>
</comment>
<comment type="cofactor">
    <cofactor evidence="1">
        <name>Mg(2+)</name>
        <dbReference type="ChEBI" id="CHEBI:18420"/>
    </cofactor>
    <text evidence="1">Binds 2 divalent ions per subunit.</text>
</comment>
<comment type="cofactor">
    <cofactor evidence="1">
        <name>K(+)</name>
        <dbReference type="ChEBI" id="CHEBI:29103"/>
    </cofactor>
    <text evidence="1">Binds 1 potassium ion per subunit.</text>
</comment>
<comment type="pathway">
    <text evidence="1">Amino-acid biosynthesis; S-adenosyl-L-methionine biosynthesis; S-adenosyl-L-methionine from L-methionine: step 1/1.</text>
</comment>
<comment type="subunit">
    <text evidence="1">Homotetramer; dimer of dimers.</text>
</comment>
<comment type="subcellular location">
    <subcellularLocation>
        <location evidence="1">Cytoplasm</location>
    </subcellularLocation>
</comment>
<comment type="similarity">
    <text evidence="1">Belongs to the AdoMet synthase family.</text>
</comment>
<dbReference type="EC" id="2.5.1.6" evidence="1"/>
<dbReference type="EMBL" id="CP000100">
    <property type="protein sequence ID" value="ABB58493.1"/>
    <property type="molecule type" value="Genomic_DNA"/>
</dbReference>
<dbReference type="RefSeq" id="WP_011378476.1">
    <property type="nucleotide sequence ID" value="NZ_JACJTX010000001.1"/>
</dbReference>
<dbReference type="SMR" id="Q31KC6"/>
<dbReference type="STRING" id="1140.Synpcc7942_2463"/>
<dbReference type="PaxDb" id="1140-Synpcc7942_2463"/>
<dbReference type="GeneID" id="72431356"/>
<dbReference type="KEGG" id="syf:Synpcc7942_2463"/>
<dbReference type="eggNOG" id="COG0192">
    <property type="taxonomic scope" value="Bacteria"/>
</dbReference>
<dbReference type="HOGENOM" id="CLU_041802_1_1_3"/>
<dbReference type="OrthoDB" id="9801686at2"/>
<dbReference type="BioCyc" id="SYNEL:SYNPCC7942_2463-MONOMER"/>
<dbReference type="UniPathway" id="UPA00315">
    <property type="reaction ID" value="UER00080"/>
</dbReference>
<dbReference type="Proteomes" id="UP000889800">
    <property type="component" value="Chromosome"/>
</dbReference>
<dbReference type="GO" id="GO:0005737">
    <property type="term" value="C:cytoplasm"/>
    <property type="evidence" value="ECO:0007669"/>
    <property type="project" value="UniProtKB-SubCell"/>
</dbReference>
<dbReference type="GO" id="GO:0005524">
    <property type="term" value="F:ATP binding"/>
    <property type="evidence" value="ECO:0007669"/>
    <property type="project" value="UniProtKB-UniRule"/>
</dbReference>
<dbReference type="GO" id="GO:0000287">
    <property type="term" value="F:magnesium ion binding"/>
    <property type="evidence" value="ECO:0007669"/>
    <property type="project" value="UniProtKB-UniRule"/>
</dbReference>
<dbReference type="GO" id="GO:0004478">
    <property type="term" value="F:methionine adenosyltransferase activity"/>
    <property type="evidence" value="ECO:0007669"/>
    <property type="project" value="UniProtKB-UniRule"/>
</dbReference>
<dbReference type="GO" id="GO:0006730">
    <property type="term" value="P:one-carbon metabolic process"/>
    <property type="evidence" value="ECO:0007669"/>
    <property type="project" value="UniProtKB-KW"/>
</dbReference>
<dbReference type="GO" id="GO:0006556">
    <property type="term" value="P:S-adenosylmethionine biosynthetic process"/>
    <property type="evidence" value="ECO:0007669"/>
    <property type="project" value="UniProtKB-UniRule"/>
</dbReference>
<dbReference type="CDD" id="cd18079">
    <property type="entry name" value="S-AdoMet_synt"/>
    <property type="match status" value="1"/>
</dbReference>
<dbReference type="FunFam" id="3.30.300.10:FF:000003">
    <property type="entry name" value="S-adenosylmethionine synthase"/>
    <property type="match status" value="1"/>
</dbReference>
<dbReference type="Gene3D" id="3.30.300.10">
    <property type="match status" value="3"/>
</dbReference>
<dbReference type="HAMAP" id="MF_00086">
    <property type="entry name" value="S_AdoMet_synth1"/>
    <property type="match status" value="1"/>
</dbReference>
<dbReference type="InterPro" id="IPR022631">
    <property type="entry name" value="ADOMET_SYNTHASE_CS"/>
</dbReference>
<dbReference type="InterPro" id="IPR022630">
    <property type="entry name" value="S-AdoMet_synt_C"/>
</dbReference>
<dbReference type="InterPro" id="IPR022629">
    <property type="entry name" value="S-AdoMet_synt_central"/>
</dbReference>
<dbReference type="InterPro" id="IPR022628">
    <property type="entry name" value="S-AdoMet_synt_N"/>
</dbReference>
<dbReference type="InterPro" id="IPR002133">
    <property type="entry name" value="S-AdoMet_synthetase"/>
</dbReference>
<dbReference type="InterPro" id="IPR022636">
    <property type="entry name" value="S-AdoMet_synthetase_sfam"/>
</dbReference>
<dbReference type="NCBIfam" id="TIGR01034">
    <property type="entry name" value="metK"/>
    <property type="match status" value="1"/>
</dbReference>
<dbReference type="PANTHER" id="PTHR11964">
    <property type="entry name" value="S-ADENOSYLMETHIONINE SYNTHETASE"/>
    <property type="match status" value="1"/>
</dbReference>
<dbReference type="Pfam" id="PF02773">
    <property type="entry name" value="S-AdoMet_synt_C"/>
    <property type="match status" value="1"/>
</dbReference>
<dbReference type="Pfam" id="PF02772">
    <property type="entry name" value="S-AdoMet_synt_M"/>
    <property type="match status" value="1"/>
</dbReference>
<dbReference type="Pfam" id="PF00438">
    <property type="entry name" value="S-AdoMet_synt_N"/>
    <property type="match status" value="1"/>
</dbReference>
<dbReference type="PIRSF" id="PIRSF000497">
    <property type="entry name" value="MAT"/>
    <property type="match status" value="1"/>
</dbReference>
<dbReference type="SUPFAM" id="SSF55973">
    <property type="entry name" value="S-adenosylmethionine synthetase"/>
    <property type="match status" value="3"/>
</dbReference>
<dbReference type="PROSITE" id="PS00376">
    <property type="entry name" value="ADOMET_SYNTHASE_1"/>
    <property type="match status" value="1"/>
</dbReference>
<dbReference type="PROSITE" id="PS00377">
    <property type="entry name" value="ADOMET_SYNTHASE_2"/>
    <property type="match status" value="1"/>
</dbReference>
<name>METK_SYNE7</name>
<evidence type="ECO:0000255" key="1">
    <source>
        <dbReference type="HAMAP-Rule" id="MF_00086"/>
    </source>
</evidence>